<reference key="1">
    <citation type="submission" date="2006-03" db="EMBL/GenBank/DDBJ databases">
        <title>Complete sequence of Rhodopseudomonas palustris BisB5.</title>
        <authorList>
            <consortium name="US DOE Joint Genome Institute"/>
            <person name="Copeland A."/>
            <person name="Lucas S."/>
            <person name="Lapidus A."/>
            <person name="Barry K."/>
            <person name="Detter J.C."/>
            <person name="Glavina del Rio T."/>
            <person name="Hammon N."/>
            <person name="Israni S."/>
            <person name="Dalin E."/>
            <person name="Tice H."/>
            <person name="Pitluck S."/>
            <person name="Chain P."/>
            <person name="Malfatti S."/>
            <person name="Shin M."/>
            <person name="Vergez L."/>
            <person name="Schmutz J."/>
            <person name="Larimer F."/>
            <person name="Land M."/>
            <person name="Hauser L."/>
            <person name="Pelletier D.A."/>
            <person name="Kyrpides N."/>
            <person name="Lykidis A."/>
            <person name="Oda Y."/>
            <person name="Harwood C.S."/>
            <person name="Richardson P."/>
        </authorList>
    </citation>
    <scope>NUCLEOTIDE SEQUENCE [LARGE SCALE GENOMIC DNA]</scope>
    <source>
        <strain>BisB5</strain>
    </source>
</reference>
<organism>
    <name type="scientific">Rhodopseudomonas palustris (strain BisB5)</name>
    <dbReference type="NCBI Taxonomy" id="316057"/>
    <lineage>
        <taxon>Bacteria</taxon>
        <taxon>Pseudomonadati</taxon>
        <taxon>Pseudomonadota</taxon>
        <taxon>Alphaproteobacteria</taxon>
        <taxon>Hyphomicrobiales</taxon>
        <taxon>Nitrobacteraceae</taxon>
        <taxon>Rhodopseudomonas</taxon>
    </lineage>
</organism>
<evidence type="ECO:0000255" key="1">
    <source>
        <dbReference type="HAMAP-Rule" id="MF_00004"/>
    </source>
</evidence>
<comment type="function">
    <text evidence="1">Catalyzes a salvage reaction resulting in the formation of AMP, that is energically less costly than de novo synthesis.</text>
</comment>
<comment type="catalytic activity">
    <reaction evidence="1">
        <text>AMP + diphosphate = 5-phospho-alpha-D-ribose 1-diphosphate + adenine</text>
        <dbReference type="Rhea" id="RHEA:16609"/>
        <dbReference type="ChEBI" id="CHEBI:16708"/>
        <dbReference type="ChEBI" id="CHEBI:33019"/>
        <dbReference type="ChEBI" id="CHEBI:58017"/>
        <dbReference type="ChEBI" id="CHEBI:456215"/>
        <dbReference type="EC" id="2.4.2.7"/>
    </reaction>
</comment>
<comment type="pathway">
    <text evidence="1">Purine metabolism; AMP biosynthesis via salvage pathway; AMP from adenine: step 1/1.</text>
</comment>
<comment type="subunit">
    <text evidence="1">Homodimer.</text>
</comment>
<comment type="subcellular location">
    <subcellularLocation>
        <location evidence="1">Cytoplasm</location>
    </subcellularLocation>
</comment>
<comment type="similarity">
    <text evidence="1">Belongs to the purine/pyrimidine phosphoribosyltransferase family.</text>
</comment>
<name>APT_RHOPS</name>
<protein>
    <recommendedName>
        <fullName evidence="1">Adenine phosphoribosyltransferase</fullName>
        <shortName evidence="1">APRT</shortName>
        <ecNumber evidence="1">2.4.2.7</ecNumber>
    </recommendedName>
</protein>
<proteinExistence type="inferred from homology"/>
<dbReference type="EC" id="2.4.2.7" evidence="1"/>
<dbReference type="EMBL" id="CP000283">
    <property type="protein sequence ID" value="ABE41429.1"/>
    <property type="molecule type" value="Genomic_DNA"/>
</dbReference>
<dbReference type="SMR" id="Q130R0"/>
<dbReference type="STRING" id="316057.RPD_4212"/>
<dbReference type="KEGG" id="rpd:RPD_4212"/>
<dbReference type="eggNOG" id="COG0503">
    <property type="taxonomic scope" value="Bacteria"/>
</dbReference>
<dbReference type="HOGENOM" id="CLU_063339_3_0_5"/>
<dbReference type="BioCyc" id="RPAL316057:RPD_RS21185-MONOMER"/>
<dbReference type="UniPathway" id="UPA00588">
    <property type="reaction ID" value="UER00646"/>
</dbReference>
<dbReference type="Proteomes" id="UP000001818">
    <property type="component" value="Chromosome"/>
</dbReference>
<dbReference type="GO" id="GO:0005737">
    <property type="term" value="C:cytoplasm"/>
    <property type="evidence" value="ECO:0007669"/>
    <property type="project" value="UniProtKB-SubCell"/>
</dbReference>
<dbReference type="GO" id="GO:0002055">
    <property type="term" value="F:adenine binding"/>
    <property type="evidence" value="ECO:0007669"/>
    <property type="project" value="TreeGrafter"/>
</dbReference>
<dbReference type="GO" id="GO:0003999">
    <property type="term" value="F:adenine phosphoribosyltransferase activity"/>
    <property type="evidence" value="ECO:0007669"/>
    <property type="project" value="UniProtKB-UniRule"/>
</dbReference>
<dbReference type="GO" id="GO:0016208">
    <property type="term" value="F:AMP binding"/>
    <property type="evidence" value="ECO:0007669"/>
    <property type="project" value="TreeGrafter"/>
</dbReference>
<dbReference type="GO" id="GO:0006168">
    <property type="term" value="P:adenine salvage"/>
    <property type="evidence" value="ECO:0007669"/>
    <property type="project" value="InterPro"/>
</dbReference>
<dbReference type="GO" id="GO:0044209">
    <property type="term" value="P:AMP salvage"/>
    <property type="evidence" value="ECO:0007669"/>
    <property type="project" value="UniProtKB-UniRule"/>
</dbReference>
<dbReference type="GO" id="GO:0006166">
    <property type="term" value="P:purine ribonucleoside salvage"/>
    <property type="evidence" value="ECO:0007669"/>
    <property type="project" value="UniProtKB-KW"/>
</dbReference>
<dbReference type="CDD" id="cd06223">
    <property type="entry name" value="PRTases_typeI"/>
    <property type="match status" value="1"/>
</dbReference>
<dbReference type="FunFam" id="3.40.50.2020:FF:000021">
    <property type="entry name" value="Adenine phosphoribosyltransferase"/>
    <property type="match status" value="1"/>
</dbReference>
<dbReference type="Gene3D" id="3.40.50.2020">
    <property type="match status" value="1"/>
</dbReference>
<dbReference type="HAMAP" id="MF_00004">
    <property type="entry name" value="Aden_phosphoribosyltr"/>
    <property type="match status" value="1"/>
</dbReference>
<dbReference type="InterPro" id="IPR005764">
    <property type="entry name" value="Ade_phspho_trans"/>
</dbReference>
<dbReference type="InterPro" id="IPR000836">
    <property type="entry name" value="PRibTrfase_dom"/>
</dbReference>
<dbReference type="InterPro" id="IPR029057">
    <property type="entry name" value="PRTase-like"/>
</dbReference>
<dbReference type="InterPro" id="IPR050054">
    <property type="entry name" value="UPRTase/APRTase"/>
</dbReference>
<dbReference type="NCBIfam" id="TIGR01090">
    <property type="entry name" value="apt"/>
    <property type="match status" value="1"/>
</dbReference>
<dbReference type="NCBIfam" id="NF002634">
    <property type="entry name" value="PRK02304.1-3"/>
    <property type="match status" value="1"/>
</dbReference>
<dbReference type="NCBIfam" id="NF002636">
    <property type="entry name" value="PRK02304.1-5"/>
    <property type="match status" value="1"/>
</dbReference>
<dbReference type="PANTHER" id="PTHR32315">
    <property type="entry name" value="ADENINE PHOSPHORIBOSYLTRANSFERASE"/>
    <property type="match status" value="1"/>
</dbReference>
<dbReference type="PANTHER" id="PTHR32315:SF3">
    <property type="entry name" value="ADENINE PHOSPHORIBOSYLTRANSFERASE"/>
    <property type="match status" value="1"/>
</dbReference>
<dbReference type="Pfam" id="PF00156">
    <property type="entry name" value="Pribosyltran"/>
    <property type="match status" value="1"/>
</dbReference>
<dbReference type="SUPFAM" id="SSF53271">
    <property type="entry name" value="PRTase-like"/>
    <property type="match status" value="1"/>
</dbReference>
<dbReference type="PROSITE" id="PS00103">
    <property type="entry name" value="PUR_PYR_PR_TRANSFER"/>
    <property type="match status" value="1"/>
</dbReference>
<sequence length="181" mass="19296">MTPELAHDLKASVRSIPDYPKPGIVFRDITTLLGDPRAFRRAVDELVQPWAGSKVDKVAGIEARGFIIGGAVAHQVSSGFVPIRKKGKLPHTCVSMEYALEYGTDHIEIHVDAVKPGERVILVDDLIATGGTAEGAIKLLRQLGAEVVAACFIVDLPDLGGAAKIRAMGVPVRTLIEFGGH</sequence>
<feature type="chain" id="PRO_1000000333" description="Adenine phosphoribosyltransferase">
    <location>
        <begin position="1"/>
        <end position="181"/>
    </location>
</feature>
<keyword id="KW-0963">Cytoplasm</keyword>
<keyword id="KW-0328">Glycosyltransferase</keyword>
<keyword id="KW-0660">Purine salvage</keyword>
<keyword id="KW-0808">Transferase</keyword>
<gene>
    <name evidence="1" type="primary">apt</name>
    <name type="ordered locus">RPD_4212</name>
</gene>
<accession>Q130R0</accession>